<comment type="function">
    <text evidence="1">Displays ATPase and GTPase activities.</text>
</comment>
<comment type="similarity">
    <text evidence="1">Belongs to the RapZ-like family.</text>
</comment>
<name>Y584_HAEDU</name>
<organism>
    <name type="scientific">Haemophilus ducreyi (strain 35000HP / ATCC 700724)</name>
    <dbReference type="NCBI Taxonomy" id="233412"/>
    <lineage>
        <taxon>Bacteria</taxon>
        <taxon>Pseudomonadati</taxon>
        <taxon>Pseudomonadota</taxon>
        <taxon>Gammaproteobacteria</taxon>
        <taxon>Pasteurellales</taxon>
        <taxon>Pasteurellaceae</taxon>
        <taxon>Haemophilus</taxon>
    </lineage>
</organism>
<sequence>MELVIISGRSGSGKSVALRALEDVGYYCVDNLPFPLIAELASFLLASDCSAVVSLDIRNFPENLTRIDELLHQLSQLTINTKMIFLDCESATLIRRYSDSRRLHPLSNQDLSLASAIELENTLLDPLRQQADYLIDTTHSSPHELAANLRHILRGSTEKELNIVFESFGFKYGLSADADYVFDVRFLPNPHWHAELRAMTGLEQPVIDFLERQTEVHNFIYQTRNYLETWLPMLEKNNRSYLTIAFGCTGGKHRSVFITEQLAKYFQSRGKNVKIRHRSLEKYHKKT</sequence>
<feature type="chain" id="PRO_0000107715" description="Nucleotide-binding protein HD_0584">
    <location>
        <begin position="1"/>
        <end position="287"/>
    </location>
</feature>
<feature type="binding site" evidence="1">
    <location>
        <begin position="8"/>
        <end position="15"/>
    </location>
    <ligand>
        <name>ATP</name>
        <dbReference type="ChEBI" id="CHEBI:30616"/>
    </ligand>
</feature>
<feature type="binding site" evidence="1">
    <location>
        <begin position="56"/>
        <end position="59"/>
    </location>
    <ligand>
        <name>GTP</name>
        <dbReference type="ChEBI" id="CHEBI:37565"/>
    </ligand>
</feature>
<evidence type="ECO:0000255" key="1">
    <source>
        <dbReference type="HAMAP-Rule" id="MF_00636"/>
    </source>
</evidence>
<protein>
    <recommendedName>
        <fullName evidence="1">Nucleotide-binding protein HD_0584</fullName>
    </recommendedName>
</protein>
<reference key="1">
    <citation type="submission" date="1999-12" db="EMBL/GenBank/DDBJ databases">
        <title>The ptsN gene region in Haemophilus ducreyi.</title>
        <authorList>
            <person name="Munson R.S. Jr."/>
            <person name="Bozue J.A."/>
        </authorList>
    </citation>
    <scope>NUCLEOTIDE SEQUENCE [GENOMIC DNA]</scope>
    <source>
        <strain>35000HP / ATCC 700724</strain>
    </source>
</reference>
<reference key="2">
    <citation type="submission" date="2003-06" db="EMBL/GenBank/DDBJ databases">
        <title>The complete genome sequence of Haemophilus ducreyi.</title>
        <authorList>
            <person name="Munson R.S. Jr."/>
            <person name="Ray W.C."/>
            <person name="Mahairas G."/>
            <person name="Sabo P."/>
            <person name="Mungur R."/>
            <person name="Johnson L."/>
            <person name="Nguyen D."/>
            <person name="Wang J."/>
            <person name="Forst C."/>
            <person name="Hood L."/>
        </authorList>
    </citation>
    <scope>NUCLEOTIDE SEQUENCE [LARGE SCALE GENOMIC DNA]</scope>
    <source>
        <strain>35000HP / ATCC 700724</strain>
    </source>
</reference>
<accession>Q9L7V3</accession>
<gene>
    <name type="ordered locus">HD_0584</name>
</gene>
<proteinExistence type="inferred from homology"/>
<dbReference type="EMBL" id="AF219259">
    <property type="protein sequence ID" value="AAF33773.1"/>
    <property type="molecule type" value="Genomic_DNA"/>
</dbReference>
<dbReference type="EMBL" id="AE017143">
    <property type="protein sequence ID" value="AAP95515.1"/>
    <property type="molecule type" value="Genomic_DNA"/>
</dbReference>
<dbReference type="RefSeq" id="WP_010944568.1">
    <property type="nucleotide sequence ID" value="NC_002940.2"/>
</dbReference>
<dbReference type="SMR" id="Q9L7V3"/>
<dbReference type="STRING" id="233412.HD_0584"/>
<dbReference type="KEGG" id="hdu:HD_0584"/>
<dbReference type="eggNOG" id="COG1660">
    <property type="taxonomic scope" value="Bacteria"/>
</dbReference>
<dbReference type="HOGENOM" id="CLU_059558_1_1_6"/>
<dbReference type="OrthoDB" id="9784461at2"/>
<dbReference type="Proteomes" id="UP000001022">
    <property type="component" value="Chromosome"/>
</dbReference>
<dbReference type="GO" id="GO:0005524">
    <property type="term" value="F:ATP binding"/>
    <property type="evidence" value="ECO:0007669"/>
    <property type="project" value="UniProtKB-UniRule"/>
</dbReference>
<dbReference type="GO" id="GO:0005525">
    <property type="term" value="F:GTP binding"/>
    <property type="evidence" value="ECO:0007669"/>
    <property type="project" value="UniProtKB-UniRule"/>
</dbReference>
<dbReference type="Gene3D" id="3.40.50.300">
    <property type="entry name" value="P-loop containing nucleotide triphosphate hydrolases"/>
    <property type="match status" value="1"/>
</dbReference>
<dbReference type="HAMAP" id="MF_00636">
    <property type="entry name" value="RapZ_like"/>
    <property type="match status" value="1"/>
</dbReference>
<dbReference type="InterPro" id="IPR027417">
    <property type="entry name" value="P-loop_NTPase"/>
</dbReference>
<dbReference type="InterPro" id="IPR005337">
    <property type="entry name" value="RapZ-like"/>
</dbReference>
<dbReference type="InterPro" id="IPR053930">
    <property type="entry name" value="RapZ-like_N"/>
</dbReference>
<dbReference type="InterPro" id="IPR053931">
    <property type="entry name" value="RapZ_C"/>
</dbReference>
<dbReference type="NCBIfam" id="NF003828">
    <property type="entry name" value="PRK05416.1"/>
    <property type="match status" value="1"/>
</dbReference>
<dbReference type="PANTHER" id="PTHR30448">
    <property type="entry name" value="RNASE ADAPTER PROTEIN RAPZ"/>
    <property type="match status" value="1"/>
</dbReference>
<dbReference type="PANTHER" id="PTHR30448:SF0">
    <property type="entry name" value="RNASE ADAPTER PROTEIN RAPZ"/>
    <property type="match status" value="1"/>
</dbReference>
<dbReference type="Pfam" id="PF22740">
    <property type="entry name" value="PapZ_C"/>
    <property type="match status" value="1"/>
</dbReference>
<dbReference type="Pfam" id="PF03668">
    <property type="entry name" value="RapZ-like_N"/>
    <property type="match status" value="1"/>
</dbReference>
<dbReference type="PIRSF" id="PIRSF005052">
    <property type="entry name" value="P-loopkin"/>
    <property type="match status" value="1"/>
</dbReference>
<dbReference type="SUPFAM" id="SSF52540">
    <property type="entry name" value="P-loop containing nucleoside triphosphate hydrolases"/>
    <property type="match status" value="1"/>
</dbReference>
<keyword id="KW-0067">ATP-binding</keyword>
<keyword id="KW-0342">GTP-binding</keyword>
<keyword id="KW-0547">Nucleotide-binding</keyword>
<keyword id="KW-1185">Reference proteome</keyword>